<gene>
    <name type="ordered locus">MG386</name>
</gene>
<keyword id="KW-0200">Cytadherence</keyword>
<keyword id="KW-1185">Reference proteome</keyword>
<keyword id="KW-0677">Repeat</keyword>
<sequence>MPKTTKNKNKNTTPKSKTKKYLESANKKSVTKPKKEQDKVENLFDQPFLGEIKKNILKKTKSFNSKKKETVKSKSKSPIDFFDETKRGVFIVPPETDILSRRELNQKTVVNTVPNQTSSYPTINENKLVELNNQPETKVLETKKDSFTTTIREKKLNPEDSQAFWYIFVGDRKYGFWKNHTWVWLGYFDQLQRWNYFKVIETVEVPQEHAAFIKQRPADIDFWRPLVGNPNYGFVQNNTWIWKGFFDKKLNWIPDPVRFTEEALGHTDSLVDEIEKKTISEQPYWEQENDIVVTVFNTKSLASSLENELLLENSSEEQPVIEEVKPRRNEVIFRNPVTKLHFEKEKFEFLNPVKETNETIPLIEIVKEEVKVESEVEAPVEIEPEAACEPETTIPEVETVFVYEDDLKGLDSNQTQAGNVPEVETVFVYEDDLKGLDSIIKDDQQHDEIAKHVEHLSQDYSKEIKDSAKADLSNISDDIDSVWKEFGSFTDETQKSVEEKSQVDEIILDANNDFINESLFRDEVVNNIDSQINETVSEQQFEPTYSVNEFQQEFSEPVVSDEKIKETNSDESVNTDLTALFSEKLVNEVLLTNEYVDVNAPFSTETEVKVSSELPKSELVDEITFINNDPKPQEGLEYKVDFLETEPKSLFDEKTTIVVESEPPFIQPDLSLELDSVNDVDKSLETKTTSVELNHEEIGNEFINLDVSEKEVQEQPTTQLETDSEFVLPTYQIVEDSFTESAETPNEFSSEQKDTLEFISQTQEVETSESNVPTVEQETKLFEHQDENNLFTPLPLDLTEIIESNALFDSKPDEKESSDSELQPTFKEIKLDSTVEVPQESSQVEATFDTVQPEAVFDEIKTQELQPEATTEVVFDDHFQPDVQPEQTPQEAKFDSPVEIPQESSQAEFHAEQISDEIKLEEKTEAVFDHQQLENQSEETVVTPTEVTAFEPETIETQLEPSSEDQPSEPALDQNHPEIVTAEVEQIFDGTKLEDLKLEEANFDNVENNEVQPKETEAEITFDETKELQQETSSEPLSTEELKSEATFDNVSEAESEAVFEKPQLETQTEKILEEEPKSEPVDQLITEASFDTVKHEAVFDKNQTQTEGLEEPQVSSEAEVVDQTTTDTVGEPEAVFDVQPEKTTEVKFDDVENQQKVISEPQVEQQPGEAVFEPSAEAKFDSPVESVQDSQPEPVLEEVQTQPEIQPVESQPEATFDTVQPEQTPQEAKFDSPVETVEQPEFSSEPTQQHVESEASFDEPNYDFDEPNYDFDQPSYDSDLQPSEPQYDVDEPNYDFDEPNYEIESKPSEPQFEPQVEQQPGEAVFEPSAEAKFDSPVESVQDSQPEPLLEEVQTQPEIQPVESQPEATFDTVQPEQTPQEAKFDSPVETIQEPQVSSEPEVVVQPNFEERKPETVLEEPQADEIQPEASEEESLDWELLVGNNSYGHYEPDGEWVWAGFFGDDQKWNKDATVKWARERDYLPLIGDEVYGRYNNKGEWIWYGFYDESGDWVLVDEQWKNRQPRINEAPKFWEKLIGNEEYGYYEDNEWNWYDGEFDSEGNWLVFQSEETENLNEDITKDIPALEGYDIDSIDADEWLSQFSADDAKDVFGSNDKK</sequence>
<feature type="chain" id="PRO_0000058127" description="Protein P200">
    <location>
        <begin position="1"/>
        <end position="1616"/>
    </location>
</feature>
<feature type="repeat" description="2-1">
    <location>
        <begin position="1161"/>
        <end position="1186"/>
    </location>
</feature>
<feature type="repeat" description="1-1">
    <location>
        <begin position="1205"/>
        <end position="1236"/>
    </location>
</feature>
<feature type="repeat" description="2-2">
    <location>
        <begin position="1310"/>
        <end position="1339"/>
    </location>
</feature>
<feature type="repeat" description="1-2">
    <location>
        <begin position="1358"/>
        <end position="1389"/>
    </location>
</feature>
<feature type="region of interest" description="Disordered" evidence="2">
    <location>
        <begin position="1"/>
        <end position="41"/>
    </location>
</feature>
<feature type="region of interest" description="Disordered" evidence="2">
    <location>
        <begin position="878"/>
        <end position="909"/>
    </location>
</feature>
<feature type="region of interest" description="2 X 26 AA repeats">
    <location>
        <begin position="891"/>
        <end position="1389"/>
    </location>
</feature>
<feature type="region of interest" description="Disordered" evidence="2">
    <location>
        <begin position="931"/>
        <end position="975"/>
    </location>
</feature>
<feature type="region of interest" description="Disordered" evidence="2">
    <location>
        <begin position="1004"/>
        <end position="1083"/>
    </location>
</feature>
<feature type="region of interest" description="Disordered" evidence="2">
    <location>
        <begin position="1100"/>
        <end position="1132"/>
    </location>
</feature>
<feature type="region of interest" description="Disordered" evidence="2">
    <location>
        <begin position="1159"/>
        <end position="1433"/>
    </location>
</feature>
<feature type="region of interest" description="2 X 32 AA repeats">
    <location>
        <begin position="1205"/>
        <end position="1389"/>
    </location>
</feature>
<feature type="compositionally biased region" description="Low complexity" evidence="2">
    <location>
        <begin position="938"/>
        <end position="952"/>
    </location>
</feature>
<feature type="compositionally biased region" description="Basic and acidic residues" evidence="2">
    <location>
        <begin position="1012"/>
        <end position="1029"/>
    </location>
</feature>
<feature type="compositionally biased region" description="Basic and acidic residues" evidence="2">
    <location>
        <begin position="1059"/>
        <end position="1081"/>
    </location>
</feature>
<feature type="compositionally biased region" description="Polar residues" evidence="2">
    <location>
        <begin position="1200"/>
        <end position="1227"/>
    </location>
</feature>
<feature type="compositionally biased region" description="Polar residues" evidence="2">
    <location>
        <begin position="1242"/>
        <end position="1251"/>
    </location>
</feature>
<feature type="compositionally biased region" description="Acidic residues" evidence="2">
    <location>
        <begin position="1256"/>
        <end position="1270"/>
    </location>
</feature>
<feature type="compositionally biased region" description="Polar residues" evidence="2">
    <location>
        <begin position="1276"/>
        <end position="1285"/>
    </location>
</feature>
<feature type="compositionally biased region" description="Acidic residues" evidence="2">
    <location>
        <begin position="1288"/>
        <end position="1302"/>
    </location>
</feature>
<feature type="compositionally biased region" description="Low complexity" evidence="2">
    <location>
        <begin position="1309"/>
        <end position="1323"/>
    </location>
</feature>
<feature type="compositionally biased region" description="Polar residues" evidence="2">
    <location>
        <begin position="1353"/>
        <end position="1380"/>
    </location>
</feature>
<feature type="compositionally biased region" description="Low complexity" evidence="2">
    <location>
        <begin position="1392"/>
        <end position="1406"/>
    </location>
</feature>
<feature type="compositionally biased region" description="Acidic residues" evidence="2">
    <location>
        <begin position="1416"/>
        <end position="1433"/>
    </location>
</feature>
<feature type="sequence conflict" description="In Ref. 2; AAA03400." evidence="3" ref="2">
    <original>P</original>
    <variation>S</variation>
    <location>
        <position position="256"/>
    </location>
</feature>
<feature type="sequence conflict" description="In Ref. 2; AAA03400." evidence="3" ref="2">
    <original>S</original>
    <variation>F</variation>
    <location>
        <position position="304"/>
    </location>
</feature>
<dbReference type="EMBL" id="L43967">
    <property type="protein sequence ID" value="AAC71613.1"/>
    <property type="molecule type" value="Genomic_DNA"/>
</dbReference>
<dbReference type="EMBL" id="U02245">
    <property type="protein sequence ID" value="AAA03400.1"/>
    <property type="molecule type" value="Genomic_DNA"/>
</dbReference>
<dbReference type="EMBL" id="U02175">
    <property type="protein sequence ID" value="AAD12458.1"/>
    <property type="molecule type" value="Genomic_DNA"/>
</dbReference>
<dbReference type="EMBL" id="U02126">
    <property type="protein sequence ID" value="AAD12402.1"/>
    <property type="molecule type" value="Genomic_DNA"/>
</dbReference>
<dbReference type="PIR" id="G64242">
    <property type="entry name" value="G64242"/>
</dbReference>
<dbReference type="RefSeq" id="WP_010869461.1">
    <property type="nucleotide sequence ID" value="NC_000908.2"/>
</dbReference>
<dbReference type="SMR" id="Q49429"/>
<dbReference type="STRING" id="243273.MG_386"/>
<dbReference type="GeneID" id="88282571"/>
<dbReference type="KEGG" id="mge:MG_386"/>
<dbReference type="eggNOG" id="COG3115">
    <property type="taxonomic scope" value="Bacteria"/>
</dbReference>
<dbReference type="HOGENOM" id="CLU_243703_0_0_14"/>
<dbReference type="InParanoid" id="Q49429"/>
<dbReference type="OrthoDB" id="401459at2"/>
<dbReference type="BioCyc" id="MGEN243273:G1GJ2-482-MONOMER"/>
<dbReference type="Proteomes" id="UP000000807">
    <property type="component" value="Chromosome"/>
</dbReference>
<dbReference type="GO" id="GO:0020035">
    <property type="term" value="P:adhesion of symbiont to microvasculature"/>
    <property type="evidence" value="ECO:0007669"/>
    <property type="project" value="UniProtKB-KW"/>
</dbReference>
<dbReference type="Gene3D" id="3.30.70.3600">
    <property type="match status" value="5"/>
</dbReference>
<dbReference type="InterPro" id="IPR022466">
    <property type="entry name" value="EAGR_box"/>
</dbReference>
<dbReference type="InterPro" id="IPR038145">
    <property type="entry name" value="EAGR_sf"/>
</dbReference>
<dbReference type="NCBIfam" id="TIGR03834">
    <property type="entry name" value="EAGR_box"/>
    <property type="match status" value="4"/>
</dbReference>
<dbReference type="Pfam" id="PF16713">
    <property type="entry name" value="EAGR_box"/>
    <property type="match status" value="5"/>
</dbReference>
<proteinExistence type="inferred from homology"/>
<evidence type="ECO:0000250" key="1"/>
<evidence type="ECO:0000256" key="2">
    <source>
        <dbReference type="SAM" id="MobiDB-lite"/>
    </source>
</evidence>
<evidence type="ECO:0000305" key="3"/>
<comment type="function">
    <text evidence="1">Could be an accessory structural component in cytadherence.</text>
</comment>
<protein>
    <recommendedName>
        <fullName>Protein P200</fullName>
    </recommendedName>
</protein>
<reference key="1">
    <citation type="journal article" date="1995" name="Science">
        <title>The minimal gene complement of Mycoplasma genitalium.</title>
        <authorList>
            <person name="Fraser C.M."/>
            <person name="Gocayne J.D."/>
            <person name="White O."/>
            <person name="Adams M.D."/>
            <person name="Clayton R.A."/>
            <person name="Fleischmann R.D."/>
            <person name="Bult C.J."/>
            <person name="Kerlavage A.R."/>
            <person name="Sutton G.G."/>
            <person name="Kelley J.M."/>
            <person name="Fritchman J.L."/>
            <person name="Weidman J.F."/>
            <person name="Small K.V."/>
            <person name="Sandusky M."/>
            <person name="Fuhrmann J.L."/>
            <person name="Nguyen D.T."/>
            <person name="Utterback T.R."/>
            <person name="Saudek D.M."/>
            <person name="Phillips C.A."/>
            <person name="Merrick J.M."/>
            <person name="Tomb J.-F."/>
            <person name="Dougherty B.A."/>
            <person name="Bott K.F."/>
            <person name="Hu P.-C."/>
            <person name="Lucier T.S."/>
            <person name="Peterson S.N."/>
            <person name="Smith H.O."/>
            <person name="Hutchison C.A. III"/>
            <person name="Venter J.C."/>
        </authorList>
    </citation>
    <scope>NUCLEOTIDE SEQUENCE [LARGE SCALE GENOMIC DNA]</scope>
    <source>
        <strain>ATCC 33530 / DSM 19775 / NCTC 10195 / G37</strain>
    </source>
</reference>
<reference key="2">
    <citation type="journal article" date="1993" name="J. Bacteriol.">
        <title>A survey of the Mycoplasma genitalium genome by using random sequencing.</title>
        <authorList>
            <person name="Peterson S.N."/>
            <person name="Hu P.-C."/>
            <person name="Bott K.F."/>
            <person name="Hutchison C.A. III"/>
        </authorList>
    </citation>
    <scope>NUCLEOTIDE SEQUENCE [GENOMIC DNA] OF 256-427; 432-543 AND 1083-1140</scope>
    <source>
        <strain>ATCC 33530 / DSM 19775 / NCTC 10195 / G37</strain>
    </source>
</reference>
<organism>
    <name type="scientific">Mycoplasma genitalium (strain ATCC 33530 / DSM 19775 / NCTC 10195 / G37)</name>
    <name type="common">Mycoplasmoides genitalium</name>
    <dbReference type="NCBI Taxonomy" id="243273"/>
    <lineage>
        <taxon>Bacteria</taxon>
        <taxon>Bacillati</taxon>
        <taxon>Mycoplasmatota</taxon>
        <taxon>Mycoplasmoidales</taxon>
        <taxon>Mycoplasmoidaceae</taxon>
        <taxon>Mycoplasmoides</taxon>
    </lineage>
</organism>
<accession>Q49429</accession>
<accession>Q49259</accession>
<accession>Q49298</accession>
<accession>Q49352</accession>
<accession>Q49353</accession>
<name>P200_MYCGE</name>